<evidence type="ECO:0000255" key="1">
    <source>
        <dbReference type="HAMAP-Rule" id="MF_00057"/>
    </source>
</evidence>
<sequence>MSFVVIIPARYASTRLPGKPLVDINGKPMIVHVLERARESGADRIIVATDHEDVARAVEAAGGEVCMTRADHQSGTERLAEVVEKCAFSDDTVIVNVQGDEPMIPATIIRQVADNLAQRQVGMATLAVPIHNAEEAFNPNAVKVVLDAEGYALYFSRATIPWDRDRFAEGLETVGDNFLRHLGIYGYRAGFIRRYVNWQPSPLEHIEMLEQLRVLWYGEKIHVAVAQEVPGTGVDTPEDLERVRAEMR</sequence>
<organism>
    <name type="scientific">Escherichia coli O8 (strain IAI1)</name>
    <dbReference type="NCBI Taxonomy" id="585034"/>
    <lineage>
        <taxon>Bacteria</taxon>
        <taxon>Pseudomonadati</taxon>
        <taxon>Pseudomonadota</taxon>
        <taxon>Gammaproteobacteria</taxon>
        <taxon>Enterobacterales</taxon>
        <taxon>Enterobacteriaceae</taxon>
        <taxon>Escherichia</taxon>
    </lineage>
</organism>
<gene>
    <name evidence="1" type="primary">kdsB</name>
    <name type="ordered locus">ECIAI1_0959</name>
</gene>
<comment type="function">
    <text evidence="1">Activates KDO (a required 8-carbon sugar) for incorporation into bacterial lipopolysaccharide in Gram-negative bacteria.</text>
</comment>
<comment type="catalytic activity">
    <reaction evidence="1">
        <text>3-deoxy-alpha-D-manno-oct-2-ulosonate + CTP = CMP-3-deoxy-beta-D-manno-octulosonate + diphosphate</text>
        <dbReference type="Rhea" id="RHEA:23448"/>
        <dbReference type="ChEBI" id="CHEBI:33019"/>
        <dbReference type="ChEBI" id="CHEBI:37563"/>
        <dbReference type="ChEBI" id="CHEBI:85986"/>
        <dbReference type="ChEBI" id="CHEBI:85987"/>
        <dbReference type="EC" id="2.7.7.38"/>
    </reaction>
</comment>
<comment type="pathway">
    <text evidence="1">Nucleotide-sugar biosynthesis; CMP-3-deoxy-D-manno-octulosonate biosynthesis; CMP-3-deoxy-D-manno-octulosonate from 3-deoxy-D-manno-octulosonate and CTP: step 1/1.</text>
</comment>
<comment type="pathway">
    <text evidence="1">Bacterial outer membrane biogenesis; lipopolysaccharide biosynthesis.</text>
</comment>
<comment type="subcellular location">
    <subcellularLocation>
        <location evidence="1">Cytoplasm</location>
    </subcellularLocation>
</comment>
<comment type="similarity">
    <text evidence="1">Belongs to the KdsB family.</text>
</comment>
<accession>B7M847</accession>
<keyword id="KW-0963">Cytoplasm</keyword>
<keyword id="KW-0448">Lipopolysaccharide biosynthesis</keyword>
<keyword id="KW-0548">Nucleotidyltransferase</keyword>
<keyword id="KW-0808">Transferase</keyword>
<proteinExistence type="inferred from homology"/>
<reference key="1">
    <citation type="journal article" date="2009" name="PLoS Genet.">
        <title>Organised genome dynamics in the Escherichia coli species results in highly diverse adaptive paths.</title>
        <authorList>
            <person name="Touchon M."/>
            <person name="Hoede C."/>
            <person name="Tenaillon O."/>
            <person name="Barbe V."/>
            <person name="Baeriswyl S."/>
            <person name="Bidet P."/>
            <person name="Bingen E."/>
            <person name="Bonacorsi S."/>
            <person name="Bouchier C."/>
            <person name="Bouvet O."/>
            <person name="Calteau A."/>
            <person name="Chiapello H."/>
            <person name="Clermont O."/>
            <person name="Cruveiller S."/>
            <person name="Danchin A."/>
            <person name="Diard M."/>
            <person name="Dossat C."/>
            <person name="Karoui M.E."/>
            <person name="Frapy E."/>
            <person name="Garry L."/>
            <person name="Ghigo J.M."/>
            <person name="Gilles A.M."/>
            <person name="Johnson J."/>
            <person name="Le Bouguenec C."/>
            <person name="Lescat M."/>
            <person name="Mangenot S."/>
            <person name="Martinez-Jehanne V."/>
            <person name="Matic I."/>
            <person name="Nassif X."/>
            <person name="Oztas S."/>
            <person name="Petit M.A."/>
            <person name="Pichon C."/>
            <person name="Rouy Z."/>
            <person name="Ruf C.S."/>
            <person name="Schneider D."/>
            <person name="Tourret J."/>
            <person name="Vacherie B."/>
            <person name="Vallenet D."/>
            <person name="Medigue C."/>
            <person name="Rocha E.P.C."/>
            <person name="Denamur E."/>
        </authorList>
    </citation>
    <scope>NUCLEOTIDE SEQUENCE [LARGE SCALE GENOMIC DNA]</scope>
    <source>
        <strain>IAI1</strain>
    </source>
</reference>
<name>KDSB_ECO8A</name>
<feature type="chain" id="PRO_1000116887" description="3-deoxy-manno-octulosonate cytidylyltransferase">
    <location>
        <begin position="1"/>
        <end position="248"/>
    </location>
</feature>
<protein>
    <recommendedName>
        <fullName evidence="1">3-deoxy-manno-octulosonate cytidylyltransferase</fullName>
        <ecNumber evidence="1">2.7.7.38</ecNumber>
    </recommendedName>
    <alternativeName>
        <fullName evidence="1">CMP-2-keto-3-deoxyoctulosonic acid synthase</fullName>
        <shortName evidence="1">CKS</shortName>
        <shortName evidence="1">CMP-KDO synthase</shortName>
    </alternativeName>
</protein>
<dbReference type="EC" id="2.7.7.38" evidence="1"/>
<dbReference type="EMBL" id="CU928160">
    <property type="protein sequence ID" value="CAQ97823.1"/>
    <property type="molecule type" value="Genomic_DNA"/>
</dbReference>
<dbReference type="RefSeq" id="WP_000011590.1">
    <property type="nucleotide sequence ID" value="NC_011741.1"/>
</dbReference>
<dbReference type="SMR" id="B7M847"/>
<dbReference type="KEGG" id="ecr:ECIAI1_0959"/>
<dbReference type="HOGENOM" id="CLU_065038_1_0_6"/>
<dbReference type="UniPathway" id="UPA00030"/>
<dbReference type="UniPathway" id="UPA00358">
    <property type="reaction ID" value="UER00476"/>
</dbReference>
<dbReference type="GO" id="GO:0005829">
    <property type="term" value="C:cytosol"/>
    <property type="evidence" value="ECO:0007669"/>
    <property type="project" value="TreeGrafter"/>
</dbReference>
<dbReference type="GO" id="GO:0008690">
    <property type="term" value="F:3-deoxy-manno-octulosonate cytidylyltransferase activity"/>
    <property type="evidence" value="ECO:0007669"/>
    <property type="project" value="UniProtKB-UniRule"/>
</dbReference>
<dbReference type="GO" id="GO:0033468">
    <property type="term" value="P:CMP-keto-3-deoxy-D-manno-octulosonic acid biosynthetic process"/>
    <property type="evidence" value="ECO:0007669"/>
    <property type="project" value="UniProtKB-UniRule"/>
</dbReference>
<dbReference type="GO" id="GO:0009103">
    <property type="term" value="P:lipopolysaccharide biosynthetic process"/>
    <property type="evidence" value="ECO:0007669"/>
    <property type="project" value="UniProtKB-UniRule"/>
</dbReference>
<dbReference type="CDD" id="cd02517">
    <property type="entry name" value="CMP-KDO-Synthetase"/>
    <property type="match status" value="1"/>
</dbReference>
<dbReference type="FunFam" id="3.90.550.10:FF:000011">
    <property type="entry name" value="3-deoxy-manno-octulosonate cytidylyltransferase"/>
    <property type="match status" value="1"/>
</dbReference>
<dbReference type="Gene3D" id="3.90.550.10">
    <property type="entry name" value="Spore Coat Polysaccharide Biosynthesis Protein SpsA, Chain A"/>
    <property type="match status" value="1"/>
</dbReference>
<dbReference type="HAMAP" id="MF_00057">
    <property type="entry name" value="KdsB"/>
    <property type="match status" value="1"/>
</dbReference>
<dbReference type="InterPro" id="IPR003329">
    <property type="entry name" value="Cytidylyl_trans"/>
</dbReference>
<dbReference type="InterPro" id="IPR004528">
    <property type="entry name" value="KdsB"/>
</dbReference>
<dbReference type="InterPro" id="IPR029044">
    <property type="entry name" value="Nucleotide-diphossugar_trans"/>
</dbReference>
<dbReference type="NCBIfam" id="TIGR00466">
    <property type="entry name" value="kdsB"/>
    <property type="match status" value="1"/>
</dbReference>
<dbReference type="NCBIfam" id="NF003950">
    <property type="entry name" value="PRK05450.1-3"/>
    <property type="match status" value="1"/>
</dbReference>
<dbReference type="NCBIfam" id="NF003952">
    <property type="entry name" value="PRK05450.1-5"/>
    <property type="match status" value="1"/>
</dbReference>
<dbReference type="NCBIfam" id="NF009905">
    <property type="entry name" value="PRK13368.1"/>
    <property type="match status" value="1"/>
</dbReference>
<dbReference type="PANTHER" id="PTHR42866">
    <property type="entry name" value="3-DEOXY-MANNO-OCTULOSONATE CYTIDYLYLTRANSFERASE"/>
    <property type="match status" value="1"/>
</dbReference>
<dbReference type="PANTHER" id="PTHR42866:SF2">
    <property type="entry name" value="3-DEOXY-MANNO-OCTULOSONATE CYTIDYLYLTRANSFERASE, MITOCHONDRIAL"/>
    <property type="match status" value="1"/>
</dbReference>
<dbReference type="Pfam" id="PF02348">
    <property type="entry name" value="CTP_transf_3"/>
    <property type="match status" value="1"/>
</dbReference>
<dbReference type="SUPFAM" id="SSF53448">
    <property type="entry name" value="Nucleotide-diphospho-sugar transferases"/>
    <property type="match status" value="1"/>
</dbReference>